<reference key="1">
    <citation type="submission" date="2007-03" db="EMBL/GenBank/DDBJ databases">
        <title>Sequence analysis of Arabidopsis pumila JS2 chloroplast DNA.</title>
        <authorList>
            <person name="Hosouchi T."/>
            <person name="Tsuruoka H."/>
            <person name="Kotani H."/>
        </authorList>
    </citation>
    <scope>NUCLEOTIDE SEQUENCE [LARGE SCALE GENOMIC DNA]</scope>
</reference>
<dbReference type="EC" id="7.1.1.-" evidence="1"/>
<dbReference type="EMBL" id="AP009368">
    <property type="protein sequence ID" value="BAF49994.1"/>
    <property type="molecule type" value="Genomic_DNA"/>
</dbReference>
<dbReference type="RefSeq" id="YP_001123169.1">
    <property type="nucleotide sequence ID" value="NC_009267.1"/>
</dbReference>
<dbReference type="SMR" id="A4QJY6"/>
<dbReference type="GeneID" id="4962410"/>
<dbReference type="GO" id="GO:0009535">
    <property type="term" value="C:chloroplast thylakoid membrane"/>
    <property type="evidence" value="ECO:0007669"/>
    <property type="project" value="UniProtKB-SubCell"/>
</dbReference>
<dbReference type="GO" id="GO:0051539">
    <property type="term" value="F:4 iron, 4 sulfur cluster binding"/>
    <property type="evidence" value="ECO:0007669"/>
    <property type="project" value="UniProtKB-KW"/>
</dbReference>
<dbReference type="GO" id="GO:0005506">
    <property type="term" value="F:iron ion binding"/>
    <property type="evidence" value="ECO:0007669"/>
    <property type="project" value="UniProtKB-UniRule"/>
</dbReference>
<dbReference type="GO" id="GO:0008137">
    <property type="term" value="F:NADH dehydrogenase (ubiquinone) activity"/>
    <property type="evidence" value="ECO:0007669"/>
    <property type="project" value="InterPro"/>
</dbReference>
<dbReference type="GO" id="GO:0048038">
    <property type="term" value="F:quinone binding"/>
    <property type="evidence" value="ECO:0007669"/>
    <property type="project" value="UniProtKB-KW"/>
</dbReference>
<dbReference type="GO" id="GO:0019684">
    <property type="term" value="P:photosynthesis, light reaction"/>
    <property type="evidence" value="ECO:0007669"/>
    <property type="project" value="UniProtKB-UniRule"/>
</dbReference>
<dbReference type="FunFam" id="3.30.70.3270:FF:000006">
    <property type="entry name" value="NAD(P)H-quinone oxidoreductase subunit I, chloroplastic"/>
    <property type="match status" value="1"/>
</dbReference>
<dbReference type="Gene3D" id="3.30.70.3270">
    <property type="match status" value="1"/>
</dbReference>
<dbReference type="HAMAP" id="MF_01351">
    <property type="entry name" value="NDH1_NuoI"/>
    <property type="match status" value="1"/>
</dbReference>
<dbReference type="InterPro" id="IPR017896">
    <property type="entry name" value="4Fe4S_Fe-S-bd"/>
</dbReference>
<dbReference type="InterPro" id="IPR017900">
    <property type="entry name" value="4Fe4S_Fe_S_CS"/>
</dbReference>
<dbReference type="InterPro" id="IPR010226">
    <property type="entry name" value="NADH_quinone_OxRdtase_chainI"/>
</dbReference>
<dbReference type="InterPro" id="IPR004497">
    <property type="entry name" value="NDHI"/>
</dbReference>
<dbReference type="NCBIfam" id="TIGR00403">
    <property type="entry name" value="ndhI"/>
    <property type="match status" value="1"/>
</dbReference>
<dbReference type="NCBIfam" id="TIGR01971">
    <property type="entry name" value="NuoI"/>
    <property type="match status" value="1"/>
</dbReference>
<dbReference type="NCBIfam" id="NF004537">
    <property type="entry name" value="PRK05888.1-3"/>
    <property type="match status" value="1"/>
</dbReference>
<dbReference type="PANTHER" id="PTHR47275">
    <property type="entry name" value="NAD(P)H-QUINONE OXIDOREDUCTASE SUBUNIT I, CHLOROPLASTIC"/>
    <property type="match status" value="1"/>
</dbReference>
<dbReference type="PANTHER" id="PTHR47275:SF1">
    <property type="entry name" value="NAD(P)H-QUINONE OXIDOREDUCTASE SUBUNIT I, CHLOROPLASTIC"/>
    <property type="match status" value="1"/>
</dbReference>
<dbReference type="Pfam" id="PF13187">
    <property type="entry name" value="Fer4_9"/>
    <property type="match status" value="1"/>
</dbReference>
<dbReference type="SUPFAM" id="SSF54862">
    <property type="entry name" value="4Fe-4S ferredoxins"/>
    <property type="match status" value="1"/>
</dbReference>
<dbReference type="PROSITE" id="PS00198">
    <property type="entry name" value="4FE4S_FER_1"/>
    <property type="match status" value="2"/>
</dbReference>
<dbReference type="PROSITE" id="PS51379">
    <property type="entry name" value="4FE4S_FER_2"/>
    <property type="match status" value="2"/>
</dbReference>
<comment type="function">
    <text evidence="1">NDH shuttles electrons from NAD(P)H:plastoquinone, via FMN and iron-sulfur (Fe-S) centers, to quinones in the photosynthetic chain and possibly in a chloroplast respiratory chain. The immediate electron acceptor for the enzyme in this species is believed to be plastoquinone. Couples the redox reaction to proton translocation, and thus conserves the redox energy in a proton gradient.</text>
</comment>
<comment type="catalytic activity">
    <reaction evidence="1">
        <text>a plastoquinone + NADH + (n+1) H(+)(in) = a plastoquinol + NAD(+) + n H(+)(out)</text>
        <dbReference type="Rhea" id="RHEA:42608"/>
        <dbReference type="Rhea" id="RHEA-COMP:9561"/>
        <dbReference type="Rhea" id="RHEA-COMP:9562"/>
        <dbReference type="ChEBI" id="CHEBI:15378"/>
        <dbReference type="ChEBI" id="CHEBI:17757"/>
        <dbReference type="ChEBI" id="CHEBI:57540"/>
        <dbReference type="ChEBI" id="CHEBI:57945"/>
        <dbReference type="ChEBI" id="CHEBI:62192"/>
    </reaction>
</comment>
<comment type="catalytic activity">
    <reaction evidence="1">
        <text>a plastoquinone + NADPH + (n+1) H(+)(in) = a plastoquinol + NADP(+) + n H(+)(out)</text>
        <dbReference type="Rhea" id="RHEA:42612"/>
        <dbReference type="Rhea" id="RHEA-COMP:9561"/>
        <dbReference type="Rhea" id="RHEA-COMP:9562"/>
        <dbReference type="ChEBI" id="CHEBI:15378"/>
        <dbReference type="ChEBI" id="CHEBI:17757"/>
        <dbReference type="ChEBI" id="CHEBI:57783"/>
        <dbReference type="ChEBI" id="CHEBI:58349"/>
        <dbReference type="ChEBI" id="CHEBI:62192"/>
    </reaction>
</comment>
<comment type="cofactor">
    <cofactor evidence="1">
        <name>[4Fe-4S] cluster</name>
        <dbReference type="ChEBI" id="CHEBI:49883"/>
    </cofactor>
    <text evidence="1">Binds 2 [4Fe-4S] clusters per subunit.</text>
</comment>
<comment type="subunit">
    <text evidence="1">NDH is composed of at least 16 different subunits, 5 of which are encoded in the nucleus.</text>
</comment>
<comment type="subcellular location">
    <subcellularLocation>
        <location evidence="1">Plastid</location>
        <location evidence="1">Chloroplast thylakoid membrane</location>
        <topology evidence="1">Peripheral membrane protein</topology>
    </subcellularLocation>
</comment>
<comment type="similarity">
    <text evidence="1">Belongs to the complex I 23 kDa subunit family.</text>
</comment>
<sequence>MLPMITGFMNYGQQTLRAARYIGQGFMITLSHTNRLPVTIQYPYEKLITSERFRGRIHFEFDKCIACEVCVRVCPIDLPVVDWKLETNIRKKRLLNYSIDFGICIFCGNCVEYCPTNCLSMTEEYEFSTYDRHELNYNQIALGRLPMSVIDDYTIRTILNSPQTKNEVNPLI</sequence>
<name>NDHI_OLIPU</name>
<gene>
    <name evidence="1" type="primary">ndhI</name>
</gene>
<evidence type="ECO:0000255" key="1">
    <source>
        <dbReference type="HAMAP-Rule" id="MF_01351"/>
    </source>
</evidence>
<accession>A4QJY6</accession>
<proteinExistence type="inferred from homology"/>
<keyword id="KW-0004">4Fe-4S</keyword>
<keyword id="KW-0150">Chloroplast</keyword>
<keyword id="KW-0408">Iron</keyword>
<keyword id="KW-0411">Iron-sulfur</keyword>
<keyword id="KW-0472">Membrane</keyword>
<keyword id="KW-0479">Metal-binding</keyword>
<keyword id="KW-0520">NAD</keyword>
<keyword id="KW-0521">NADP</keyword>
<keyword id="KW-0934">Plastid</keyword>
<keyword id="KW-0618">Plastoquinone</keyword>
<keyword id="KW-0874">Quinone</keyword>
<keyword id="KW-0677">Repeat</keyword>
<keyword id="KW-0793">Thylakoid</keyword>
<keyword id="KW-1278">Translocase</keyword>
<protein>
    <recommendedName>
        <fullName evidence="1">NAD(P)H-quinone oxidoreductase subunit I, chloroplastic</fullName>
        <ecNumber evidence="1">7.1.1.-</ecNumber>
    </recommendedName>
    <alternativeName>
        <fullName evidence="1">NAD(P)H dehydrogenase subunit I</fullName>
        <shortName evidence="1">NDH subunit I</shortName>
    </alternativeName>
    <alternativeName>
        <fullName evidence="1">NADH-plastoquinone oxidoreductase subunit I</fullName>
    </alternativeName>
</protein>
<feature type="chain" id="PRO_0000298583" description="NAD(P)H-quinone oxidoreductase subunit I, chloroplastic">
    <location>
        <begin position="1"/>
        <end position="172"/>
    </location>
</feature>
<feature type="domain" description="4Fe-4S ferredoxin-type 1" evidence="1">
    <location>
        <begin position="55"/>
        <end position="84"/>
    </location>
</feature>
<feature type="domain" description="4Fe-4S ferredoxin-type 2" evidence="1">
    <location>
        <begin position="95"/>
        <end position="124"/>
    </location>
</feature>
<feature type="binding site" evidence="1">
    <location>
        <position position="64"/>
    </location>
    <ligand>
        <name>[4Fe-4S] cluster</name>
        <dbReference type="ChEBI" id="CHEBI:49883"/>
        <label>1</label>
    </ligand>
</feature>
<feature type="binding site" evidence="1">
    <location>
        <position position="67"/>
    </location>
    <ligand>
        <name>[4Fe-4S] cluster</name>
        <dbReference type="ChEBI" id="CHEBI:49883"/>
        <label>1</label>
    </ligand>
</feature>
<feature type="binding site" evidence="1">
    <location>
        <position position="70"/>
    </location>
    <ligand>
        <name>[4Fe-4S] cluster</name>
        <dbReference type="ChEBI" id="CHEBI:49883"/>
        <label>1</label>
    </ligand>
</feature>
<feature type="binding site" evidence="1">
    <location>
        <position position="74"/>
    </location>
    <ligand>
        <name>[4Fe-4S] cluster</name>
        <dbReference type="ChEBI" id="CHEBI:49883"/>
        <label>2</label>
    </ligand>
</feature>
<feature type="binding site" evidence="1">
    <location>
        <position position="104"/>
    </location>
    <ligand>
        <name>[4Fe-4S] cluster</name>
        <dbReference type="ChEBI" id="CHEBI:49883"/>
        <label>2</label>
    </ligand>
</feature>
<feature type="binding site" evidence="1">
    <location>
        <position position="107"/>
    </location>
    <ligand>
        <name>[4Fe-4S] cluster</name>
        <dbReference type="ChEBI" id="CHEBI:49883"/>
        <label>2</label>
    </ligand>
</feature>
<feature type="binding site" evidence="1">
    <location>
        <position position="110"/>
    </location>
    <ligand>
        <name>[4Fe-4S] cluster</name>
        <dbReference type="ChEBI" id="CHEBI:49883"/>
        <label>2</label>
    </ligand>
</feature>
<feature type="binding site" evidence="1">
    <location>
        <position position="114"/>
    </location>
    <ligand>
        <name>[4Fe-4S] cluster</name>
        <dbReference type="ChEBI" id="CHEBI:49883"/>
        <label>1</label>
    </ligand>
</feature>
<geneLocation type="chloroplast"/>
<organism>
    <name type="scientific">Olimarabidopsis pumila</name>
    <name type="common">Dwarf rocket</name>
    <name type="synonym">Arabidopsis griffithiana</name>
    <dbReference type="NCBI Taxonomy" id="74718"/>
    <lineage>
        <taxon>Eukaryota</taxon>
        <taxon>Viridiplantae</taxon>
        <taxon>Streptophyta</taxon>
        <taxon>Embryophyta</taxon>
        <taxon>Tracheophyta</taxon>
        <taxon>Spermatophyta</taxon>
        <taxon>Magnoliopsida</taxon>
        <taxon>eudicotyledons</taxon>
        <taxon>Gunneridae</taxon>
        <taxon>Pentapetalae</taxon>
        <taxon>rosids</taxon>
        <taxon>malvids</taxon>
        <taxon>Brassicales</taxon>
        <taxon>Brassicaceae</taxon>
        <taxon>Alyssopsideae</taxon>
        <taxon>Olimarabidopsis</taxon>
    </lineage>
</organism>